<reference key="1">
    <citation type="journal article" date="2009" name="PLoS Genet.">
        <title>Organised genome dynamics in the Escherichia coli species results in highly diverse adaptive paths.</title>
        <authorList>
            <person name="Touchon M."/>
            <person name="Hoede C."/>
            <person name="Tenaillon O."/>
            <person name="Barbe V."/>
            <person name="Baeriswyl S."/>
            <person name="Bidet P."/>
            <person name="Bingen E."/>
            <person name="Bonacorsi S."/>
            <person name="Bouchier C."/>
            <person name="Bouvet O."/>
            <person name="Calteau A."/>
            <person name="Chiapello H."/>
            <person name="Clermont O."/>
            <person name="Cruveiller S."/>
            <person name="Danchin A."/>
            <person name="Diard M."/>
            <person name="Dossat C."/>
            <person name="Karoui M.E."/>
            <person name="Frapy E."/>
            <person name="Garry L."/>
            <person name="Ghigo J.M."/>
            <person name="Gilles A.M."/>
            <person name="Johnson J."/>
            <person name="Le Bouguenec C."/>
            <person name="Lescat M."/>
            <person name="Mangenot S."/>
            <person name="Martinez-Jehanne V."/>
            <person name="Matic I."/>
            <person name="Nassif X."/>
            <person name="Oztas S."/>
            <person name="Petit M.A."/>
            <person name="Pichon C."/>
            <person name="Rouy Z."/>
            <person name="Ruf C.S."/>
            <person name="Schneider D."/>
            <person name="Tourret J."/>
            <person name="Vacherie B."/>
            <person name="Vallenet D."/>
            <person name="Medigue C."/>
            <person name="Rocha E.P.C."/>
            <person name="Denamur E."/>
        </authorList>
    </citation>
    <scope>NUCLEOTIDE SEQUENCE [LARGE SCALE GENOMIC DNA]</scope>
    <source>
        <strain>IAI1</strain>
    </source>
</reference>
<proteinExistence type="inferred from homology"/>
<protein>
    <recommendedName>
        <fullName evidence="1">NAD-dependent malic enzyme</fullName>
        <shortName evidence="1">NAD-ME</shortName>
        <ecNumber evidence="1">1.1.1.38</ecNumber>
    </recommendedName>
</protein>
<feature type="chain" id="PRO_1000185994" description="NAD-dependent malic enzyme">
    <location>
        <begin position="1"/>
        <end position="565"/>
    </location>
</feature>
<feature type="active site" description="Proton donor" evidence="1">
    <location>
        <position position="104"/>
    </location>
</feature>
<feature type="active site" description="Proton acceptor" evidence="1">
    <location>
        <position position="175"/>
    </location>
</feature>
<feature type="binding site" evidence="1">
    <location>
        <position position="157"/>
    </location>
    <ligand>
        <name>NAD(+)</name>
        <dbReference type="ChEBI" id="CHEBI:57540"/>
    </ligand>
</feature>
<feature type="binding site" evidence="1">
    <location>
        <position position="246"/>
    </location>
    <ligand>
        <name>a divalent metal cation</name>
        <dbReference type="ChEBI" id="CHEBI:60240"/>
    </ligand>
</feature>
<feature type="binding site" evidence="1">
    <location>
        <position position="247"/>
    </location>
    <ligand>
        <name>a divalent metal cation</name>
        <dbReference type="ChEBI" id="CHEBI:60240"/>
    </ligand>
</feature>
<feature type="binding site" evidence="1">
    <location>
        <position position="270"/>
    </location>
    <ligand>
        <name>a divalent metal cation</name>
        <dbReference type="ChEBI" id="CHEBI:60240"/>
    </ligand>
</feature>
<feature type="binding site" evidence="1">
    <location>
        <position position="270"/>
    </location>
    <ligand>
        <name>NAD(+)</name>
        <dbReference type="ChEBI" id="CHEBI:57540"/>
    </ligand>
</feature>
<feature type="binding site" evidence="1">
    <location>
        <position position="418"/>
    </location>
    <ligand>
        <name>NAD(+)</name>
        <dbReference type="ChEBI" id="CHEBI:57540"/>
    </ligand>
</feature>
<feature type="site" description="Important for activity" evidence="1">
    <location>
        <position position="270"/>
    </location>
</feature>
<accession>B7LZ73</accession>
<keyword id="KW-0479">Metal-binding</keyword>
<keyword id="KW-0520">NAD</keyword>
<keyword id="KW-0560">Oxidoreductase</keyword>
<gene>
    <name evidence="1" type="primary">maeA</name>
    <name type="ordered locus">ECIAI1_1483</name>
</gene>
<sequence length="565" mass="63163">MEPKTKKQRSLYIPYAGPVLLEFPLLNKGSAFSMEERRNFNLLGLLPEVVETIEEQAERAWIQYQGFKTEIDKHIYLRNIQDTNETLFYRLVNNHLDEMMPVIYTPTVGAACERFSEIYRRSRGVFISYQNRHNMDDILQNVPNHNIKVIVVTDGERILGLGDQGIGGMGIPIGKLSLYTACGGISPAYTLPVVLDVGTNNQQLLNDPLYMGWRNPRITDDEYYEFVDEFIQAVKQRWPDVLLQFEDFAQKNAMPLLNRYRNEICSFNDDIQGTAAVTVGTLIAASRAAGGQLSEKKIVFLGAGSAGCGIAEMIIAQTQREGLSEEAARQKVFMVDRFGLLTDKMPNLLPFQTKLVQKRENLSDWDTDSDVLSLLDVVRNVKPDILIGVSGQTGLFTEEIIREMHKHCPRPIVMPLSNPTSRVEATPQDIIAWTEGNALVATGSPFNPVVWKDKIYPIAQCNNAFIFPGIGLGVIASGASRITDEMLMSASETLAQYSPLVLNGEGLVLPELKDIQKVSRAIAFAVGKMAQQQGVAVKTSAEALQQAIDDNFWQAEYRDYRRTSI</sequence>
<evidence type="ECO:0000255" key="1">
    <source>
        <dbReference type="HAMAP-Rule" id="MF_01619"/>
    </source>
</evidence>
<name>MAO1_ECO8A</name>
<comment type="catalytic activity">
    <reaction evidence="1">
        <text>(S)-malate + NAD(+) = pyruvate + CO2 + NADH</text>
        <dbReference type="Rhea" id="RHEA:12653"/>
        <dbReference type="ChEBI" id="CHEBI:15361"/>
        <dbReference type="ChEBI" id="CHEBI:15589"/>
        <dbReference type="ChEBI" id="CHEBI:16526"/>
        <dbReference type="ChEBI" id="CHEBI:57540"/>
        <dbReference type="ChEBI" id="CHEBI:57945"/>
        <dbReference type="EC" id="1.1.1.38"/>
    </reaction>
</comment>
<comment type="catalytic activity">
    <reaction evidence="1">
        <text>oxaloacetate + H(+) = pyruvate + CO2</text>
        <dbReference type="Rhea" id="RHEA:15641"/>
        <dbReference type="ChEBI" id="CHEBI:15361"/>
        <dbReference type="ChEBI" id="CHEBI:15378"/>
        <dbReference type="ChEBI" id="CHEBI:16452"/>
        <dbReference type="ChEBI" id="CHEBI:16526"/>
        <dbReference type="EC" id="1.1.1.38"/>
    </reaction>
</comment>
<comment type="cofactor">
    <cofactor evidence="1">
        <name>Mg(2+)</name>
        <dbReference type="ChEBI" id="CHEBI:18420"/>
    </cofactor>
    <cofactor evidence="1">
        <name>Mn(2+)</name>
        <dbReference type="ChEBI" id="CHEBI:29035"/>
    </cofactor>
    <text evidence="1">Divalent metal cations. Prefers magnesium or manganese.</text>
</comment>
<comment type="subunit">
    <text evidence="1">Homotetramer.</text>
</comment>
<comment type="similarity">
    <text evidence="1">Belongs to the malic enzymes family.</text>
</comment>
<organism>
    <name type="scientific">Escherichia coli O8 (strain IAI1)</name>
    <dbReference type="NCBI Taxonomy" id="585034"/>
    <lineage>
        <taxon>Bacteria</taxon>
        <taxon>Pseudomonadati</taxon>
        <taxon>Pseudomonadota</taxon>
        <taxon>Gammaproteobacteria</taxon>
        <taxon>Enterobacterales</taxon>
        <taxon>Enterobacteriaceae</taxon>
        <taxon>Escherichia</taxon>
    </lineage>
</organism>
<dbReference type="EC" id="1.1.1.38" evidence="1"/>
<dbReference type="EMBL" id="CU928160">
    <property type="protein sequence ID" value="CAQ98340.1"/>
    <property type="molecule type" value="Genomic_DNA"/>
</dbReference>
<dbReference type="RefSeq" id="WP_000433464.1">
    <property type="nucleotide sequence ID" value="NC_011741.1"/>
</dbReference>
<dbReference type="SMR" id="B7LZ73"/>
<dbReference type="GeneID" id="93775638"/>
<dbReference type="KEGG" id="ecr:ECIAI1_1483"/>
<dbReference type="HOGENOM" id="CLU_011405_5_2_6"/>
<dbReference type="GO" id="GO:0005829">
    <property type="term" value="C:cytosol"/>
    <property type="evidence" value="ECO:0007669"/>
    <property type="project" value="TreeGrafter"/>
</dbReference>
<dbReference type="GO" id="GO:0004471">
    <property type="term" value="F:malate dehydrogenase (decarboxylating) (NAD+) activity"/>
    <property type="evidence" value="ECO:0007669"/>
    <property type="project" value="UniProtKB-UniRule"/>
</dbReference>
<dbReference type="GO" id="GO:0046872">
    <property type="term" value="F:metal ion binding"/>
    <property type="evidence" value="ECO:0007669"/>
    <property type="project" value="UniProtKB-KW"/>
</dbReference>
<dbReference type="GO" id="GO:0051287">
    <property type="term" value="F:NAD binding"/>
    <property type="evidence" value="ECO:0007669"/>
    <property type="project" value="InterPro"/>
</dbReference>
<dbReference type="GO" id="GO:0008948">
    <property type="term" value="F:oxaloacetate decarboxylase activity"/>
    <property type="evidence" value="ECO:0007669"/>
    <property type="project" value="UniProtKB-UniRule"/>
</dbReference>
<dbReference type="GO" id="GO:0006108">
    <property type="term" value="P:malate metabolic process"/>
    <property type="evidence" value="ECO:0007669"/>
    <property type="project" value="TreeGrafter"/>
</dbReference>
<dbReference type="CDD" id="cd05312">
    <property type="entry name" value="NAD_bind_1_malic_enz"/>
    <property type="match status" value="1"/>
</dbReference>
<dbReference type="FunFam" id="3.40.50.10380:FF:000001">
    <property type="entry name" value="NAD-dependent malic enzyme"/>
    <property type="match status" value="1"/>
</dbReference>
<dbReference type="FunFam" id="3.40.50.720:FF:000055">
    <property type="entry name" value="NAD-dependent malic enzyme"/>
    <property type="match status" value="1"/>
</dbReference>
<dbReference type="Gene3D" id="3.40.50.10380">
    <property type="entry name" value="Malic enzyme, N-terminal domain"/>
    <property type="match status" value="1"/>
</dbReference>
<dbReference type="Gene3D" id="3.40.50.720">
    <property type="entry name" value="NAD(P)-binding Rossmann-like Domain"/>
    <property type="match status" value="1"/>
</dbReference>
<dbReference type="HAMAP" id="MF_01619">
    <property type="entry name" value="NAD_malic_enz"/>
    <property type="match status" value="1"/>
</dbReference>
<dbReference type="InterPro" id="IPR046346">
    <property type="entry name" value="Aminoacid_DH-like_N_sf"/>
</dbReference>
<dbReference type="InterPro" id="IPR015884">
    <property type="entry name" value="Malic_enzyme_CS"/>
</dbReference>
<dbReference type="InterPro" id="IPR012301">
    <property type="entry name" value="Malic_N_dom"/>
</dbReference>
<dbReference type="InterPro" id="IPR037062">
    <property type="entry name" value="Malic_N_dom_sf"/>
</dbReference>
<dbReference type="InterPro" id="IPR012302">
    <property type="entry name" value="Malic_NAD-bd"/>
</dbReference>
<dbReference type="InterPro" id="IPR001891">
    <property type="entry name" value="Malic_OxRdtase"/>
</dbReference>
<dbReference type="InterPro" id="IPR036291">
    <property type="entry name" value="NAD(P)-bd_dom_sf"/>
</dbReference>
<dbReference type="InterPro" id="IPR023667">
    <property type="entry name" value="NAD_malic_enz_proteobac"/>
</dbReference>
<dbReference type="NCBIfam" id="NF010052">
    <property type="entry name" value="PRK13529.1"/>
    <property type="match status" value="1"/>
</dbReference>
<dbReference type="PANTHER" id="PTHR23406">
    <property type="entry name" value="MALIC ENZYME-RELATED"/>
    <property type="match status" value="1"/>
</dbReference>
<dbReference type="PANTHER" id="PTHR23406:SF34">
    <property type="entry name" value="NAD-DEPENDENT MALIC ENZYME, MITOCHONDRIAL"/>
    <property type="match status" value="1"/>
</dbReference>
<dbReference type="Pfam" id="PF00390">
    <property type="entry name" value="malic"/>
    <property type="match status" value="1"/>
</dbReference>
<dbReference type="Pfam" id="PF03949">
    <property type="entry name" value="Malic_M"/>
    <property type="match status" value="1"/>
</dbReference>
<dbReference type="PIRSF" id="PIRSF000106">
    <property type="entry name" value="ME"/>
    <property type="match status" value="1"/>
</dbReference>
<dbReference type="PRINTS" id="PR00072">
    <property type="entry name" value="MALOXRDTASE"/>
</dbReference>
<dbReference type="SMART" id="SM01274">
    <property type="entry name" value="malic"/>
    <property type="match status" value="1"/>
</dbReference>
<dbReference type="SMART" id="SM00919">
    <property type="entry name" value="Malic_M"/>
    <property type="match status" value="1"/>
</dbReference>
<dbReference type="SUPFAM" id="SSF53223">
    <property type="entry name" value="Aminoacid dehydrogenase-like, N-terminal domain"/>
    <property type="match status" value="1"/>
</dbReference>
<dbReference type="SUPFAM" id="SSF51735">
    <property type="entry name" value="NAD(P)-binding Rossmann-fold domains"/>
    <property type="match status" value="1"/>
</dbReference>
<dbReference type="PROSITE" id="PS00331">
    <property type="entry name" value="MALIC_ENZYMES"/>
    <property type="match status" value="1"/>
</dbReference>